<protein>
    <recommendedName>
        <fullName>Protein MGF 360-5L</fullName>
    </recommendedName>
</protein>
<evidence type="ECO:0000269" key="1">
    <source>
    </source>
</evidence>
<evidence type="ECO:0000269" key="2">
    <source>
    </source>
</evidence>
<evidence type="ECO:0000305" key="3"/>
<feature type="chain" id="PRO_0000373258" description="Protein MGF 360-5L">
    <location>
        <begin position="1"/>
        <end position="60"/>
    </location>
</feature>
<gene>
    <name type="ordered locus">BA71V-017</name>
    <name type="ORF">UP60L</name>
</gene>
<proteinExistence type="evidence at transcript level"/>
<name>3605L_ASFB7</name>
<reference key="1">
    <citation type="journal article" date="1990" name="J. Virol.">
        <title>Multigene families in African swine fever virus: family 360.</title>
        <authorList>
            <person name="Gonzalez A."/>
            <person name="Calvo V."/>
            <person name="Almazan F."/>
            <person name="Almendral J.M."/>
            <person name="Ramirez J.C."/>
            <person name="de la Vega I."/>
            <person name="Blasco R."/>
            <person name="Vinuela E."/>
        </authorList>
    </citation>
    <scope>NUCLEOTIDE SEQUENCE [GENOMIC DNA]</scope>
</reference>
<reference key="2">
    <citation type="journal article" date="1995" name="Virology">
        <title>Analysis of the complete nucleotide sequence of African swine fever virus.</title>
        <authorList>
            <person name="Yanez R.J."/>
            <person name="Rodriguez J.M."/>
            <person name="Nogal M.L."/>
            <person name="Yuste L."/>
            <person name="Enriquez C."/>
            <person name="Rodriguez J.F."/>
            <person name="Vinuela E."/>
        </authorList>
    </citation>
    <scope>NUCLEOTIDE SEQUENCE [LARGE SCALE GENOMIC DNA]</scope>
</reference>
<reference key="3">
    <citation type="journal article" date="2001" name="J. Virol.">
        <title>African swine fever virus multigene family 360 and 530 genes are novel macrophage host range determinants.</title>
        <authorList>
            <person name="Zsak L."/>
            <person name="Lu Z."/>
            <person name="Burrage T.G."/>
            <person name="Neilan J.G."/>
            <person name="Kutish G.F."/>
            <person name="Moore D.M."/>
            <person name="Rock D.L."/>
        </authorList>
    </citation>
    <scope>FUNCTION</scope>
</reference>
<reference key="4">
    <citation type="journal article" date="2020" name="J. Virol.">
        <title>The African Swine Fever Virus Transcriptome.</title>
        <authorList>
            <person name="Cackett G."/>
            <person name="Matelska D."/>
            <person name="Sykora M."/>
            <person name="Portugal R."/>
            <person name="Malecki M."/>
            <person name="Baehler J."/>
            <person name="Dixon L."/>
            <person name="Werner F."/>
        </authorList>
    </citation>
    <scope>INDUCTION</scope>
</reference>
<comment type="function">
    <text evidence="1">Plays a role in virus cell tropism, and may be required for efficient virus replication in macrophages.</text>
</comment>
<comment type="induction">
    <text evidence="2">Expressed in the early phase of the viral replicative cycle.</text>
</comment>
<comment type="miscellaneous">
    <text>May be a truncated MGF 360 family protein.</text>
</comment>
<comment type="similarity">
    <text evidence="3">Belongs to the asfivirus MGF 360 family.</text>
</comment>
<accession>Q65133</accession>
<keyword id="KW-0244">Early protein</keyword>
<keyword id="KW-1185">Reference proteome</keyword>
<dbReference type="EMBL" id="U18466">
    <property type="protein sequence ID" value="AAA65248.1"/>
    <property type="molecule type" value="Genomic_DNA"/>
</dbReference>
<dbReference type="RefSeq" id="NP_042712.1">
    <property type="nucleotide sequence ID" value="NC_001659.2"/>
</dbReference>
<dbReference type="SMR" id="Q65133"/>
<dbReference type="GeneID" id="22220402"/>
<dbReference type="KEGG" id="vg:22220402"/>
<dbReference type="Proteomes" id="UP000000624">
    <property type="component" value="Segment"/>
</dbReference>
<organismHost>
    <name type="scientific">Ornithodoros</name>
    <name type="common">relapsing fever ticks</name>
    <dbReference type="NCBI Taxonomy" id="6937"/>
</organismHost>
<organismHost>
    <name type="scientific">Sus scrofa</name>
    <name type="common">Pig</name>
    <dbReference type="NCBI Taxonomy" id="9823"/>
</organismHost>
<organism>
    <name type="scientific">African swine fever virus (strain Badajoz 1971 Vero-adapted)</name>
    <name type="common">Ba71V</name>
    <name type="synonym">ASFV</name>
    <dbReference type="NCBI Taxonomy" id="10498"/>
    <lineage>
        <taxon>Viruses</taxon>
        <taxon>Varidnaviria</taxon>
        <taxon>Bamfordvirae</taxon>
        <taxon>Nucleocytoviricota</taxon>
        <taxon>Pokkesviricetes</taxon>
        <taxon>Asfuvirales</taxon>
        <taxon>Asfarviridae</taxon>
        <taxon>Asfivirus</taxon>
        <taxon>African swine fever virus</taxon>
    </lineage>
</organism>
<sequence length="60" mass="6982">MNSLQVLTKKVLIENKAFSEYHEDDIFILQQLGLWWTQSPGILIKLQGRSGKRINIPERS</sequence>